<keyword id="KW-0235">DNA replication</keyword>
<keyword id="KW-0496">Mitochondrion</keyword>
<keyword id="KW-1185">Reference proteome</keyword>
<keyword id="KW-0804">Transcription</keyword>
<keyword id="KW-0805">Transcription regulation</keyword>
<keyword id="KW-0809">Transit peptide</keyword>
<proteinExistence type="evidence at protein level"/>
<name>MTEF5_DROME</name>
<organism evidence="9">
    <name type="scientific">Drosophila melanogaster</name>
    <name type="common">Fruit fly</name>
    <dbReference type="NCBI Taxonomy" id="7227"/>
    <lineage>
        <taxon>Eukaryota</taxon>
        <taxon>Metazoa</taxon>
        <taxon>Ecdysozoa</taxon>
        <taxon>Arthropoda</taxon>
        <taxon>Hexapoda</taxon>
        <taxon>Insecta</taxon>
        <taxon>Pterygota</taxon>
        <taxon>Neoptera</taxon>
        <taxon>Endopterygota</taxon>
        <taxon>Diptera</taxon>
        <taxon>Brachycera</taxon>
        <taxon>Muscomorpha</taxon>
        <taxon>Ephydroidea</taxon>
        <taxon>Drosophilidae</taxon>
        <taxon>Drosophila</taxon>
        <taxon>Sophophora</taxon>
    </lineage>
</organism>
<protein>
    <recommendedName>
        <fullName evidence="6">Transcription termination factor 5, mitochondrial</fullName>
    </recommendedName>
    <alternativeName>
        <fullName evidence="5">Mitochondrial transcription termination factor 5</fullName>
        <shortName evidence="5">mTerf5</shortName>
    </alternativeName>
</protein>
<accession>Q9VEB4</accession>
<dbReference type="EMBL" id="AE014297">
    <property type="protein sequence ID" value="AAF55513.1"/>
    <property type="molecule type" value="Genomic_DNA"/>
</dbReference>
<dbReference type="EMBL" id="AY061101">
    <property type="protein sequence ID" value="AAL28649.1"/>
    <property type="molecule type" value="mRNA"/>
</dbReference>
<dbReference type="RefSeq" id="NP_650693.1">
    <property type="nucleotide sequence ID" value="NM_142436.4"/>
</dbReference>
<dbReference type="FunCoup" id="Q9VEB4">
    <property type="interactions" value="120"/>
</dbReference>
<dbReference type="STRING" id="7227.FBpp0083029"/>
<dbReference type="PaxDb" id="7227-FBpp0083029"/>
<dbReference type="DNASU" id="42182"/>
<dbReference type="EnsemblMetazoa" id="FBtr0083609">
    <property type="protein sequence ID" value="FBpp0083029"/>
    <property type="gene ID" value="FBgn0038584"/>
</dbReference>
<dbReference type="GeneID" id="42182"/>
<dbReference type="KEGG" id="dme:Dmel_CG7175"/>
<dbReference type="UCSC" id="CG7175-RA">
    <property type="organism name" value="d. melanogaster"/>
</dbReference>
<dbReference type="AGR" id="FB:FBgn0038584"/>
<dbReference type="CTD" id="42182"/>
<dbReference type="FlyBase" id="FBgn0038584">
    <property type="gene designation" value="mTerf5"/>
</dbReference>
<dbReference type="VEuPathDB" id="VectorBase:FBgn0038584"/>
<dbReference type="eggNOG" id="ENOG502RXWB">
    <property type="taxonomic scope" value="Eukaryota"/>
</dbReference>
<dbReference type="HOGENOM" id="CLU_040703_0_0_1"/>
<dbReference type="InParanoid" id="Q9VEB4"/>
<dbReference type="OMA" id="RHPNWCH"/>
<dbReference type="OrthoDB" id="10064535at2759"/>
<dbReference type="PhylomeDB" id="Q9VEB4"/>
<dbReference type="BioGRID-ORCS" id="42182">
    <property type="hits" value="0 hits in 1 CRISPR screen"/>
</dbReference>
<dbReference type="GenomeRNAi" id="42182"/>
<dbReference type="PRO" id="PR:Q9VEB4"/>
<dbReference type="Proteomes" id="UP000000803">
    <property type="component" value="Chromosome 3R"/>
</dbReference>
<dbReference type="Bgee" id="FBgn0038584">
    <property type="expression patterns" value="Expressed in egg chamber and 38 other cell types or tissues"/>
</dbReference>
<dbReference type="GO" id="GO:0005759">
    <property type="term" value="C:mitochondrial matrix"/>
    <property type="evidence" value="ECO:0000318"/>
    <property type="project" value="GO_Central"/>
</dbReference>
<dbReference type="GO" id="GO:0005739">
    <property type="term" value="C:mitochondrion"/>
    <property type="evidence" value="ECO:0000314"/>
    <property type="project" value="FlyBase"/>
</dbReference>
<dbReference type="GO" id="GO:0003690">
    <property type="term" value="F:double-stranded DNA binding"/>
    <property type="evidence" value="ECO:0007669"/>
    <property type="project" value="InterPro"/>
</dbReference>
<dbReference type="GO" id="GO:0003676">
    <property type="term" value="F:nucleic acid binding"/>
    <property type="evidence" value="ECO:0000318"/>
    <property type="project" value="GO_Central"/>
</dbReference>
<dbReference type="GO" id="GO:0006260">
    <property type="term" value="P:DNA replication"/>
    <property type="evidence" value="ECO:0007669"/>
    <property type="project" value="UniProtKB-KW"/>
</dbReference>
<dbReference type="GO" id="GO:0006390">
    <property type="term" value="P:mitochondrial transcription"/>
    <property type="evidence" value="ECO:0000315"/>
    <property type="project" value="FlyBase"/>
</dbReference>
<dbReference type="GO" id="GO:0006355">
    <property type="term" value="P:regulation of DNA-templated transcription"/>
    <property type="evidence" value="ECO:0007669"/>
    <property type="project" value="InterPro"/>
</dbReference>
<dbReference type="GO" id="GO:0006393">
    <property type="term" value="P:termination of mitochondrial transcription"/>
    <property type="evidence" value="ECO:0000318"/>
    <property type="project" value="GO_Central"/>
</dbReference>
<dbReference type="FunFam" id="1.25.70.10:FF:000055">
    <property type="entry name" value="Transcription termination factor 5, mitochondrial"/>
    <property type="match status" value="1"/>
</dbReference>
<dbReference type="FunFam" id="1.25.70.10:FF:000044">
    <property type="entry name" value="uncharacterized protein LOC108087286"/>
    <property type="match status" value="1"/>
</dbReference>
<dbReference type="Gene3D" id="1.25.70.10">
    <property type="entry name" value="Transcription termination factor 3, mitochondrial"/>
    <property type="match status" value="2"/>
</dbReference>
<dbReference type="InterPro" id="IPR003690">
    <property type="entry name" value="MTERF"/>
</dbReference>
<dbReference type="InterPro" id="IPR038538">
    <property type="entry name" value="MTERF_sf"/>
</dbReference>
<dbReference type="PANTHER" id="PTHR15437:SF7">
    <property type="entry name" value="TRANSCRIPTION TERMINATION FACTOR 5, MITOCHONDRIAL"/>
    <property type="match status" value="1"/>
</dbReference>
<dbReference type="PANTHER" id="PTHR15437">
    <property type="entry name" value="TRANSCRIPTION TERMINATION FACTOR, MITOCHONDRIAL"/>
    <property type="match status" value="1"/>
</dbReference>
<dbReference type="SMART" id="SM00733">
    <property type="entry name" value="Mterf"/>
    <property type="match status" value="4"/>
</dbReference>
<sequence>MLRNGQNQAQLLARSLGQLARGMASSKRVSSKKEDLKPKLPKPPTVEIPMEEPLNASYLSKTLGSSYRSWAAALEKHPELKTLKRKDLLSSYDTLKSLDYSVDDIIAKPMIIYYGATTLANRHSVLQECGFHNVTVQTLAKYVTVVNKPIEVLKAHNYIPFDVKVAERLAGYFKDIKLPVDLRELESETLTLKSLRQSLINAYLRERLQMDDNDLQKLWRVYTRIRHKSFRAVQDTIELLTKEFNFSAERLRKNSFLLYSEADNVRRILREVPTIDSQDIREIGFRRPKILMSTCDSLKQTLQHVHAFGISEDAVLRCLEVLTLGPDTVLERLRDLQEIEEFQVLGTNPRILRLVHYQNKARLRLDYLNQLRVRCASLHILSCGSEAFAKFARDGSDRTKGRDIVVYLSNVLGKDVQVLRNLLSRHPNWCHIPLLHVKQCLEYLRSKKFKLNEIFANIHLLLYPIKRIEEKMLLLQSPDAQEDLQLPVANFDSLSNNEILTLILYLIESEFHFTGDGIWTEQHTHHVENFNNLLPDFPESLNKVYKYGVKPAEKMIMERL</sequence>
<comment type="function">
    <text evidence="3 4">Binds promoter DNA and regulates initiation of transcription (PubMed:22784680, PubMed:24068965). Regulates mitochondrial replication and transcription (PubMed:22784680, PubMed:24068965). Required for normal topology and maintenance of mitochondrial DNA (mtDNA) levels (PubMed:22784680, PubMed:24068965). Regulates mtDNA replication by re-activating replication after replication pausing (PubMed:24068965). Likely to regulate replication pausing by coordinating with the mitochondrial termination factor mTTF which promotes replication pausing (PubMed:24068965). Their function in replication pausing prevents unregulated replication that may occur for example by collisions between the machineries of DNA replication and transcription during mtDNA synthesis (PubMed:24068965). This ensures the incorporation of RNA transcripts into replication intermediates at the replication fork and allows for proper fork progression (PubMed:24068965). Possibly functions downstream of Dref which activates genes involved in mtDNA replication and maintenance (PubMed:24068965).</text>
</comment>
<comment type="subunit">
    <text evidence="3">Probably binds to the mTTF-DNA complex.</text>
</comment>
<comment type="subcellular location">
    <subcellularLocation>
        <location evidence="3">Mitochondrion</location>
    </subcellularLocation>
</comment>
<comment type="disruption phenotype">
    <text evidence="4">RNAi-mediated knockdown is lethal. Most mutants fail to develop past the L3 larval stage, and the few pupal escapers do not develop past the late pupal stages.</text>
</comment>
<comment type="similarity">
    <text evidence="6">Belongs to the mTERF family.</text>
</comment>
<reference evidence="9" key="1">
    <citation type="journal article" date="2000" name="Science">
        <title>The genome sequence of Drosophila melanogaster.</title>
        <authorList>
            <person name="Adams M.D."/>
            <person name="Celniker S.E."/>
            <person name="Holt R.A."/>
            <person name="Evans C.A."/>
            <person name="Gocayne J.D."/>
            <person name="Amanatides P.G."/>
            <person name="Scherer S.E."/>
            <person name="Li P.W."/>
            <person name="Hoskins R.A."/>
            <person name="Galle R.F."/>
            <person name="George R.A."/>
            <person name="Lewis S.E."/>
            <person name="Richards S."/>
            <person name="Ashburner M."/>
            <person name="Henderson S.N."/>
            <person name="Sutton G.G."/>
            <person name="Wortman J.R."/>
            <person name="Yandell M.D."/>
            <person name="Zhang Q."/>
            <person name="Chen L.X."/>
            <person name="Brandon R.C."/>
            <person name="Rogers Y.-H.C."/>
            <person name="Blazej R.G."/>
            <person name="Champe M."/>
            <person name="Pfeiffer B.D."/>
            <person name="Wan K.H."/>
            <person name="Doyle C."/>
            <person name="Baxter E.G."/>
            <person name="Helt G."/>
            <person name="Nelson C.R."/>
            <person name="Miklos G.L.G."/>
            <person name="Abril J.F."/>
            <person name="Agbayani A."/>
            <person name="An H.-J."/>
            <person name="Andrews-Pfannkoch C."/>
            <person name="Baldwin D."/>
            <person name="Ballew R.M."/>
            <person name="Basu A."/>
            <person name="Baxendale J."/>
            <person name="Bayraktaroglu L."/>
            <person name="Beasley E.M."/>
            <person name="Beeson K.Y."/>
            <person name="Benos P.V."/>
            <person name="Berman B.P."/>
            <person name="Bhandari D."/>
            <person name="Bolshakov S."/>
            <person name="Borkova D."/>
            <person name="Botchan M.R."/>
            <person name="Bouck J."/>
            <person name="Brokstein P."/>
            <person name="Brottier P."/>
            <person name="Burtis K.C."/>
            <person name="Busam D.A."/>
            <person name="Butler H."/>
            <person name="Cadieu E."/>
            <person name="Center A."/>
            <person name="Chandra I."/>
            <person name="Cherry J.M."/>
            <person name="Cawley S."/>
            <person name="Dahlke C."/>
            <person name="Davenport L.B."/>
            <person name="Davies P."/>
            <person name="de Pablos B."/>
            <person name="Delcher A."/>
            <person name="Deng Z."/>
            <person name="Mays A.D."/>
            <person name="Dew I."/>
            <person name="Dietz S.M."/>
            <person name="Dodson K."/>
            <person name="Doup L.E."/>
            <person name="Downes M."/>
            <person name="Dugan-Rocha S."/>
            <person name="Dunkov B.C."/>
            <person name="Dunn P."/>
            <person name="Durbin K.J."/>
            <person name="Evangelista C.C."/>
            <person name="Ferraz C."/>
            <person name="Ferriera S."/>
            <person name="Fleischmann W."/>
            <person name="Fosler C."/>
            <person name="Gabrielian A.E."/>
            <person name="Garg N.S."/>
            <person name="Gelbart W.M."/>
            <person name="Glasser K."/>
            <person name="Glodek A."/>
            <person name="Gong F."/>
            <person name="Gorrell J.H."/>
            <person name="Gu Z."/>
            <person name="Guan P."/>
            <person name="Harris M."/>
            <person name="Harris N.L."/>
            <person name="Harvey D.A."/>
            <person name="Heiman T.J."/>
            <person name="Hernandez J.R."/>
            <person name="Houck J."/>
            <person name="Hostin D."/>
            <person name="Houston K.A."/>
            <person name="Howland T.J."/>
            <person name="Wei M.-H."/>
            <person name="Ibegwam C."/>
            <person name="Jalali M."/>
            <person name="Kalush F."/>
            <person name="Karpen G.H."/>
            <person name="Ke Z."/>
            <person name="Kennison J.A."/>
            <person name="Ketchum K.A."/>
            <person name="Kimmel B.E."/>
            <person name="Kodira C.D."/>
            <person name="Kraft C.L."/>
            <person name="Kravitz S."/>
            <person name="Kulp D."/>
            <person name="Lai Z."/>
            <person name="Lasko P."/>
            <person name="Lei Y."/>
            <person name="Levitsky A.A."/>
            <person name="Li J.H."/>
            <person name="Li Z."/>
            <person name="Liang Y."/>
            <person name="Lin X."/>
            <person name="Liu X."/>
            <person name="Mattei B."/>
            <person name="McIntosh T.C."/>
            <person name="McLeod M.P."/>
            <person name="McPherson D."/>
            <person name="Merkulov G."/>
            <person name="Milshina N.V."/>
            <person name="Mobarry C."/>
            <person name="Morris J."/>
            <person name="Moshrefi A."/>
            <person name="Mount S.M."/>
            <person name="Moy M."/>
            <person name="Murphy B."/>
            <person name="Murphy L."/>
            <person name="Muzny D.M."/>
            <person name="Nelson D.L."/>
            <person name="Nelson D.R."/>
            <person name="Nelson K.A."/>
            <person name="Nixon K."/>
            <person name="Nusskern D.R."/>
            <person name="Pacleb J.M."/>
            <person name="Palazzolo M."/>
            <person name="Pittman G.S."/>
            <person name="Pan S."/>
            <person name="Pollard J."/>
            <person name="Puri V."/>
            <person name="Reese M.G."/>
            <person name="Reinert K."/>
            <person name="Remington K."/>
            <person name="Saunders R.D.C."/>
            <person name="Scheeler F."/>
            <person name="Shen H."/>
            <person name="Shue B.C."/>
            <person name="Siden-Kiamos I."/>
            <person name="Simpson M."/>
            <person name="Skupski M.P."/>
            <person name="Smith T.J."/>
            <person name="Spier E."/>
            <person name="Spradling A.C."/>
            <person name="Stapleton M."/>
            <person name="Strong R."/>
            <person name="Sun E."/>
            <person name="Svirskas R."/>
            <person name="Tector C."/>
            <person name="Turner R."/>
            <person name="Venter E."/>
            <person name="Wang A.H."/>
            <person name="Wang X."/>
            <person name="Wang Z.-Y."/>
            <person name="Wassarman D.A."/>
            <person name="Weinstock G.M."/>
            <person name="Weissenbach J."/>
            <person name="Williams S.M."/>
            <person name="Woodage T."/>
            <person name="Worley K.C."/>
            <person name="Wu D."/>
            <person name="Yang S."/>
            <person name="Yao Q.A."/>
            <person name="Ye J."/>
            <person name="Yeh R.-F."/>
            <person name="Zaveri J.S."/>
            <person name="Zhan M."/>
            <person name="Zhang G."/>
            <person name="Zhao Q."/>
            <person name="Zheng L."/>
            <person name="Zheng X.H."/>
            <person name="Zhong F.N."/>
            <person name="Zhong W."/>
            <person name="Zhou X."/>
            <person name="Zhu S.C."/>
            <person name="Zhu X."/>
            <person name="Smith H.O."/>
            <person name="Gibbs R.A."/>
            <person name="Myers E.W."/>
            <person name="Rubin G.M."/>
            <person name="Venter J.C."/>
        </authorList>
    </citation>
    <scope>NUCLEOTIDE SEQUENCE [LARGE SCALE GENOMIC DNA]</scope>
    <source>
        <strain evidence="9">Berkeley</strain>
    </source>
</reference>
<reference evidence="9" key="2">
    <citation type="journal article" date="2002" name="Genome Biol.">
        <title>Annotation of the Drosophila melanogaster euchromatic genome: a systematic review.</title>
        <authorList>
            <person name="Misra S."/>
            <person name="Crosby M.A."/>
            <person name="Mungall C.J."/>
            <person name="Matthews B.B."/>
            <person name="Campbell K.S."/>
            <person name="Hradecky P."/>
            <person name="Huang Y."/>
            <person name="Kaminker J.S."/>
            <person name="Millburn G.H."/>
            <person name="Prochnik S.E."/>
            <person name="Smith C.D."/>
            <person name="Tupy J.L."/>
            <person name="Whitfield E.J."/>
            <person name="Bayraktaroglu L."/>
            <person name="Berman B.P."/>
            <person name="Bettencourt B.R."/>
            <person name="Celniker S.E."/>
            <person name="de Grey A.D.N.J."/>
            <person name="Drysdale R.A."/>
            <person name="Harris N.L."/>
            <person name="Richter J."/>
            <person name="Russo S."/>
            <person name="Schroeder A.J."/>
            <person name="Shu S.Q."/>
            <person name="Stapleton M."/>
            <person name="Yamada C."/>
            <person name="Ashburner M."/>
            <person name="Gelbart W.M."/>
            <person name="Rubin G.M."/>
            <person name="Lewis S.E."/>
        </authorList>
    </citation>
    <scope>GENOME REANNOTATION</scope>
    <source>
        <strain evidence="9">Berkeley</strain>
    </source>
</reference>
<reference evidence="7" key="3">
    <citation type="journal article" date="2002" name="Genome Biol.">
        <title>A Drosophila full-length cDNA resource.</title>
        <authorList>
            <person name="Stapleton M."/>
            <person name="Carlson J.W."/>
            <person name="Brokstein P."/>
            <person name="Yu C."/>
            <person name="Champe M."/>
            <person name="George R.A."/>
            <person name="Guarin H."/>
            <person name="Kronmiller B."/>
            <person name="Pacleb J.M."/>
            <person name="Park S."/>
            <person name="Wan K.H."/>
            <person name="Rubin G.M."/>
            <person name="Celniker S.E."/>
        </authorList>
    </citation>
    <scope>NUCLEOTIDE SEQUENCE [LARGE SCALE MRNA]</scope>
    <source>
        <strain evidence="7">Berkeley</strain>
        <tissue evidence="7">Embryo</tissue>
    </source>
</reference>
<reference evidence="6" key="4">
    <citation type="journal article" date="2012" name="Mitochondrion">
        <title>D-MTERF5 is a novel factor modulating transcription in Drosophila mitochondria.</title>
        <authorList>
            <person name="Bruni F."/>
            <person name="Manzari C."/>
            <person name="Filice M."/>
            <person name="Loguercio Polosa P."/>
            <person name="Colella M."/>
            <person name="Carmone C."/>
            <person name="Hambardjieva E."/>
            <person name="Garcia-Diaz M."/>
            <person name="Cantatore P."/>
            <person name="Roberti M."/>
        </authorList>
    </citation>
    <scope>FUNCTION</scope>
    <scope>SUBUNIT</scope>
    <scope>SUBCELLULAR LOCATION</scope>
</reference>
<reference evidence="6" key="5">
    <citation type="journal article" date="2013" name="PLoS Genet.">
        <title>Mitochondrial transcription terminator family members mTTF and mTerf5 have opposing roles in coordination of mtDNA synthesis.</title>
        <authorList>
            <person name="Joers P."/>
            <person name="Lewis S.C."/>
            <person name="Fukuoh A."/>
            <person name="Parhiala M."/>
            <person name="Ellilae S."/>
            <person name="Holt I.J."/>
            <person name="Jacobs H.T."/>
        </authorList>
    </citation>
    <scope>FUNCTION</scope>
    <scope>DISRUPTION PHENOTYPE</scope>
</reference>
<gene>
    <name evidence="5 8" type="primary">mTerf5</name>
    <name evidence="8" type="ORF">CG7175</name>
</gene>
<feature type="transit peptide" description="Mitochondrion" evidence="1">
    <location>
        <begin position="1"/>
        <end position="23"/>
    </location>
</feature>
<feature type="chain" id="PRO_0000438964" description="Transcription termination factor 5, mitochondrial" evidence="1">
    <location>
        <begin position="24"/>
        <end position="560"/>
    </location>
</feature>
<feature type="region of interest" description="Disordered" evidence="2">
    <location>
        <begin position="23"/>
        <end position="47"/>
    </location>
</feature>
<evidence type="ECO:0000255" key="1"/>
<evidence type="ECO:0000256" key="2">
    <source>
        <dbReference type="SAM" id="MobiDB-lite"/>
    </source>
</evidence>
<evidence type="ECO:0000269" key="3">
    <source>
    </source>
</evidence>
<evidence type="ECO:0000269" key="4">
    <source>
    </source>
</evidence>
<evidence type="ECO:0000303" key="5">
    <source>
    </source>
</evidence>
<evidence type="ECO:0000305" key="6"/>
<evidence type="ECO:0000312" key="7">
    <source>
        <dbReference type="EMBL" id="AAL28649.1"/>
    </source>
</evidence>
<evidence type="ECO:0000312" key="8">
    <source>
        <dbReference type="FlyBase" id="FBgn0038584"/>
    </source>
</evidence>
<evidence type="ECO:0000312" key="9">
    <source>
        <dbReference type="Proteomes" id="UP000000803"/>
    </source>
</evidence>